<gene>
    <name evidence="8" type="primary">hypA</name>
    <name type="ordered locus">b2726</name>
    <name type="ordered locus">JW2696</name>
</gene>
<feature type="chain" id="PRO_0000129057" description="Hydrogenase maturation factor HypA">
    <location>
        <begin position="1"/>
        <end position="116"/>
    </location>
</feature>
<feature type="binding site" evidence="1 10">
    <location>
        <position position="2"/>
    </location>
    <ligand>
        <name>Ni(2+)</name>
        <dbReference type="ChEBI" id="CHEBI:49786"/>
    </ligand>
</feature>
<feature type="binding site" evidence="1">
    <location>
        <position position="73"/>
    </location>
    <ligand>
        <name>Zn(2+)</name>
        <dbReference type="ChEBI" id="CHEBI:29105"/>
    </ligand>
</feature>
<feature type="binding site" evidence="1">
    <location>
        <position position="76"/>
    </location>
    <ligand>
        <name>Zn(2+)</name>
        <dbReference type="ChEBI" id="CHEBI:29105"/>
    </ligand>
</feature>
<feature type="binding site" evidence="1">
    <location>
        <position position="90"/>
    </location>
    <ligand>
        <name>Zn(2+)</name>
        <dbReference type="ChEBI" id="CHEBI:29105"/>
    </ligand>
</feature>
<feature type="binding site" evidence="1">
    <location>
        <position position="93"/>
    </location>
    <ligand>
        <name>Zn(2+)</name>
        <dbReference type="ChEBI" id="CHEBI:29105"/>
    </ligand>
</feature>
<feature type="mutagenesis site" description="Does not affect interaction with HycE." evidence="5">
    <original>H</original>
    <variation>A</variation>
    <location>
        <position position="2"/>
    </location>
</feature>
<feature type="mutagenesis site" description="Can bind nickel, but with reduced affinity. Decreases nickel transfer from HypB and cannot support hydrogenase maturation." evidence="7">
    <original>H</original>
    <variation>Q</variation>
    <location>
        <position position="2"/>
    </location>
</feature>
<proteinExistence type="evidence at protein level"/>
<organism>
    <name type="scientific">Escherichia coli (strain K12)</name>
    <dbReference type="NCBI Taxonomy" id="83333"/>
    <lineage>
        <taxon>Bacteria</taxon>
        <taxon>Pseudomonadati</taxon>
        <taxon>Pseudomonadota</taxon>
        <taxon>Gammaproteobacteria</taxon>
        <taxon>Enterobacterales</taxon>
        <taxon>Enterobacteriaceae</taxon>
        <taxon>Escherichia</taxon>
    </lineage>
</organism>
<sequence length="116" mass="13168">MHEITLCQRALELIEQQAAKHGAKRVTGVWLKIGAFSCVETSSLAFCFDLVCRGSVAEGCKLHLEEQEAECWCETCQQYVTLLTQRVRRCPQCHGDMLQIVADDGLQIRRIEIDQE</sequence>
<evidence type="ECO:0000255" key="1">
    <source>
        <dbReference type="HAMAP-Rule" id="MF_00213"/>
    </source>
</evidence>
<evidence type="ECO:0000269" key="2">
    <source>
    </source>
</evidence>
<evidence type="ECO:0000269" key="3">
    <source>
    </source>
</evidence>
<evidence type="ECO:0000269" key="4">
    <source>
    </source>
</evidence>
<evidence type="ECO:0000269" key="5">
    <source>
    </source>
</evidence>
<evidence type="ECO:0000269" key="6">
    <source>
    </source>
</evidence>
<evidence type="ECO:0000269" key="7">
    <source>
    </source>
</evidence>
<evidence type="ECO:0000303" key="8">
    <source>
    </source>
</evidence>
<evidence type="ECO:0000305" key="9"/>
<evidence type="ECO:0000305" key="10">
    <source>
    </source>
</evidence>
<dbReference type="EMBL" id="X54543">
    <property type="protein sequence ID" value="CAA38412.1"/>
    <property type="molecule type" value="Genomic_DNA"/>
</dbReference>
<dbReference type="EMBL" id="U29579">
    <property type="protein sequence ID" value="AAA69236.1"/>
    <property type="molecule type" value="Genomic_DNA"/>
</dbReference>
<dbReference type="EMBL" id="U00096">
    <property type="protein sequence ID" value="AAC75768.1"/>
    <property type="molecule type" value="Genomic_DNA"/>
</dbReference>
<dbReference type="EMBL" id="AP009048">
    <property type="protein sequence ID" value="BAE76803.1"/>
    <property type="molecule type" value="Genomic_DNA"/>
</dbReference>
<dbReference type="PIR" id="S15197">
    <property type="entry name" value="S15197"/>
</dbReference>
<dbReference type="RefSeq" id="NP_417206.1">
    <property type="nucleotide sequence ID" value="NC_000913.3"/>
</dbReference>
<dbReference type="RefSeq" id="WP_001299100.1">
    <property type="nucleotide sequence ID" value="NZ_STEB01000027.1"/>
</dbReference>
<dbReference type="SMR" id="P0A700"/>
<dbReference type="BioGRID" id="4261428">
    <property type="interactions" value="8"/>
</dbReference>
<dbReference type="BioGRID" id="851527">
    <property type="interactions" value="1"/>
</dbReference>
<dbReference type="ComplexPortal" id="CPX-5056">
    <property type="entry name" value="HypAB Ni-hydrogenase maturation complex"/>
</dbReference>
<dbReference type="DIP" id="DIP-48022N"/>
<dbReference type="FunCoup" id="P0A700">
    <property type="interactions" value="73"/>
</dbReference>
<dbReference type="IntAct" id="P0A700">
    <property type="interactions" value="9"/>
</dbReference>
<dbReference type="STRING" id="511145.b2726"/>
<dbReference type="PaxDb" id="511145-b2726"/>
<dbReference type="EnsemblBacteria" id="AAC75768">
    <property type="protein sequence ID" value="AAC75768"/>
    <property type="gene ID" value="b2726"/>
</dbReference>
<dbReference type="GeneID" id="93779282"/>
<dbReference type="GeneID" id="947195"/>
<dbReference type="KEGG" id="ecj:JW2696"/>
<dbReference type="KEGG" id="eco:b2726"/>
<dbReference type="KEGG" id="ecoc:C3026_15000"/>
<dbReference type="PATRIC" id="fig|1411691.4.peg.4015"/>
<dbReference type="EchoBASE" id="EB0478"/>
<dbReference type="eggNOG" id="COG0375">
    <property type="taxonomic scope" value="Bacteria"/>
</dbReference>
<dbReference type="HOGENOM" id="CLU_126929_0_0_6"/>
<dbReference type="InParanoid" id="P0A700"/>
<dbReference type="OMA" id="RITAVWM"/>
<dbReference type="OrthoDB" id="288014at2"/>
<dbReference type="PhylomeDB" id="P0A700"/>
<dbReference type="BioCyc" id="EcoCyc:EG10483-MONOMER"/>
<dbReference type="BioCyc" id="MetaCyc:EG10483-MONOMER"/>
<dbReference type="PRO" id="PR:P0A700"/>
<dbReference type="Proteomes" id="UP000000625">
    <property type="component" value="Chromosome"/>
</dbReference>
<dbReference type="GO" id="GO:1905360">
    <property type="term" value="C:GTPase complex"/>
    <property type="evidence" value="ECO:0000353"/>
    <property type="project" value="ComplexPortal"/>
</dbReference>
<dbReference type="GO" id="GO:0005886">
    <property type="term" value="C:plasma membrane"/>
    <property type="evidence" value="ECO:0007669"/>
    <property type="project" value="UniProtKB-SubCell"/>
</dbReference>
<dbReference type="GO" id="GO:0042802">
    <property type="term" value="F:identical protein binding"/>
    <property type="evidence" value="ECO:0000353"/>
    <property type="project" value="IntAct"/>
</dbReference>
<dbReference type="GO" id="GO:0016530">
    <property type="term" value="F:metallochaperone activity"/>
    <property type="evidence" value="ECO:0000315"/>
    <property type="project" value="EcoCyc"/>
</dbReference>
<dbReference type="GO" id="GO:0016151">
    <property type="term" value="F:nickel cation binding"/>
    <property type="evidence" value="ECO:0000314"/>
    <property type="project" value="EcoCyc"/>
</dbReference>
<dbReference type="GO" id="GO:0008270">
    <property type="term" value="F:zinc ion binding"/>
    <property type="evidence" value="ECO:0000314"/>
    <property type="project" value="EcoCyc"/>
</dbReference>
<dbReference type="GO" id="GO:0051604">
    <property type="term" value="P:protein maturation"/>
    <property type="evidence" value="ECO:0000315"/>
    <property type="project" value="EcoCyc"/>
</dbReference>
<dbReference type="GO" id="GO:0036211">
    <property type="term" value="P:protein modification process"/>
    <property type="evidence" value="ECO:0007669"/>
    <property type="project" value="UniProtKB-UniRule"/>
</dbReference>
<dbReference type="GO" id="GO:0065003">
    <property type="term" value="P:protein-containing complex assembly"/>
    <property type="evidence" value="ECO:0000303"/>
    <property type="project" value="ComplexPortal"/>
</dbReference>
<dbReference type="FunFam" id="3.30.2320.80:FF:000001">
    <property type="entry name" value="Hydrogenase maturation factor HypA"/>
    <property type="match status" value="1"/>
</dbReference>
<dbReference type="Gene3D" id="3.30.2320.80">
    <property type="match status" value="1"/>
</dbReference>
<dbReference type="HAMAP" id="MF_00213">
    <property type="entry name" value="HypA_HybF"/>
    <property type="match status" value="1"/>
</dbReference>
<dbReference type="InterPro" id="IPR020538">
    <property type="entry name" value="Hydgase_Ni_incorp_HypA/HybF_CS"/>
</dbReference>
<dbReference type="InterPro" id="IPR000688">
    <property type="entry name" value="HypA/HybF"/>
</dbReference>
<dbReference type="NCBIfam" id="TIGR00100">
    <property type="entry name" value="hypA"/>
    <property type="match status" value="1"/>
</dbReference>
<dbReference type="NCBIfam" id="NF002979">
    <property type="entry name" value="PRK03681.1"/>
    <property type="match status" value="1"/>
</dbReference>
<dbReference type="NCBIfam" id="NF009046">
    <property type="entry name" value="PRK12380.1"/>
    <property type="match status" value="1"/>
</dbReference>
<dbReference type="PANTHER" id="PTHR34535">
    <property type="entry name" value="HYDROGENASE MATURATION FACTOR HYPA"/>
    <property type="match status" value="1"/>
</dbReference>
<dbReference type="PANTHER" id="PTHR34535:SF3">
    <property type="entry name" value="HYDROGENASE MATURATION FACTOR HYPA"/>
    <property type="match status" value="1"/>
</dbReference>
<dbReference type="Pfam" id="PF01155">
    <property type="entry name" value="HypA"/>
    <property type="match status" value="1"/>
</dbReference>
<dbReference type="PIRSF" id="PIRSF004761">
    <property type="entry name" value="Hydrgn_mat_HypA"/>
    <property type="match status" value="1"/>
</dbReference>
<dbReference type="PROSITE" id="PS01249">
    <property type="entry name" value="HYPA"/>
    <property type="match status" value="1"/>
</dbReference>
<keyword id="KW-0997">Cell inner membrane</keyword>
<keyword id="KW-1003">Cell membrane</keyword>
<keyword id="KW-0472">Membrane</keyword>
<keyword id="KW-0479">Metal-binding</keyword>
<keyword id="KW-0533">Nickel</keyword>
<keyword id="KW-1185">Reference proteome</keyword>
<keyword id="KW-0862">Zinc</keyword>
<accession>P0A700</accession>
<accession>P24189</accession>
<accession>Q2MAA3</accession>
<reference key="1">
    <citation type="journal article" date="1991" name="Mol. Microbiol.">
        <title>Molecular characterization of an operon (hyp) necessary for the activity of the three hydrogenase isoenzymes in Escherichia coli.</title>
        <authorList>
            <person name="Lutz S."/>
            <person name="Jacobi A."/>
            <person name="Schlensog V."/>
            <person name="Boehm R."/>
            <person name="Sawers G."/>
            <person name="Boeck A."/>
        </authorList>
    </citation>
    <scope>NUCLEOTIDE SEQUENCE [GENOMIC DNA]</scope>
</reference>
<reference key="2">
    <citation type="journal article" date="1997" name="Science">
        <title>The complete genome sequence of Escherichia coli K-12.</title>
        <authorList>
            <person name="Blattner F.R."/>
            <person name="Plunkett G. III"/>
            <person name="Bloch C.A."/>
            <person name="Perna N.T."/>
            <person name="Burland V."/>
            <person name="Riley M."/>
            <person name="Collado-Vides J."/>
            <person name="Glasner J.D."/>
            <person name="Rode C.K."/>
            <person name="Mayhew G.F."/>
            <person name="Gregor J."/>
            <person name="Davis N.W."/>
            <person name="Kirkpatrick H.A."/>
            <person name="Goeden M.A."/>
            <person name="Rose D.J."/>
            <person name="Mau B."/>
            <person name="Shao Y."/>
        </authorList>
    </citation>
    <scope>NUCLEOTIDE SEQUENCE [LARGE SCALE GENOMIC DNA]</scope>
    <source>
        <strain>K12 / MG1655 / ATCC 47076</strain>
    </source>
</reference>
<reference key="3">
    <citation type="journal article" date="2006" name="Mol. Syst. Biol.">
        <title>Highly accurate genome sequences of Escherichia coli K-12 strains MG1655 and W3110.</title>
        <authorList>
            <person name="Hayashi K."/>
            <person name="Morooka N."/>
            <person name="Yamamoto Y."/>
            <person name="Fujita K."/>
            <person name="Isono K."/>
            <person name="Choi S."/>
            <person name="Ohtsubo E."/>
            <person name="Baba T."/>
            <person name="Wanner B.L."/>
            <person name="Mori H."/>
            <person name="Horiuchi T."/>
        </authorList>
    </citation>
    <scope>NUCLEOTIDE SEQUENCE [LARGE SCALE GENOMIC DNA]</scope>
    <source>
        <strain>K12 / W3110 / ATCC 27325 / DSM 5911</strain>
    </source>
</reference>
<reference key="4">
    <citation type="journal article" date="1992" name="Arch. Microbiol.">
        <title>The hyp operon gene products are required for the maturation of catalytically active hydrogenase isoenzymes in Escherichia coli.</title>
        <authorList>
            <person name="Jacobi A."/>
            <person name="Rossmann R."/>
            <person name="Boeck A."/>
        </authorList>
    </citation>
    <scope>DISRUPTION PHENOTYPE</scope>
</reference>
<reference key="5">
    <citation type="journal article" date="1997" name="Electrophoresis">
        <title>Escherichia coli proteome analysis using the gene-protein database.</title>
        <authorList>
            <person name="VanBogelen R.A."/>
            <person name="Abshire K.Z."/>
            <person name="Moldover B."/>
            <person name="Olson E.R."/>
            <person name="Neidhardt F.C."/>
        </authorList>
    </citation>
    <scope>IDENTIFICATION BY 2D-GEL</scope>
</reference>
<reference key="6">
    <citation type="journal article" date="2002" name="J. Bacteriol.">
        <title>Network of hydrogenase maturation in Escherichia coli: role of accessory proteins HypA and HybF.</title>
        <authorList>
            <person name="Hube M."/>
            <person name="Blokesch M."/>
            <person name="Boeck A."/>
        </authorList>
    </citation>
    <scope>FUNCTION</scope>
    <scope>DISRUPTION PHENOTYPE</scope>
    <source>
        <strain>K12 / MC4100 / ATCC 35695 / DSM 6574</strain>
    </source>
</reference>
<reference key="7">
    <citation type="journal article" date="2005" name="J. Bacteriol.">
        <title>Escherichia coli HypA is a zinc metalloprotein with a weak affinity for nickel.</title>
        <authorList>
            <person name="Atanassova A."/>
            <person name="Zamble D.B."/>
        </authorList>
    </citation>
    <scope>FUNCTION</scope>
    <scope>SUBUNIT</scope>
    <scope>INTERACTION WITH HYPB</scope>
    <scope>NICKEL-BINDING</scope>
    <scope>ZINC-BINDING</scope>
</reference>
<reference key="8">
    <citation type="journal article" date="2011" name="J. Biol. Chem.">
        <title>Protein interactions and localization of the Escherichia coli accessory protein HypA during nickel insertion to [NiFe] hydrogenase.</title>
        <authorList>
            <person name="Chan Chung K.C."/>
            <person name="Zamble D.B."/>
        </authorList>
    </citation>
    <scope>FUNCTION</scope>
    <scope>INTERACTION WITH HYPB; SLYD AND HYCE</scope>
    <scope>SUBCELLULAR LOCATION</scope>
    <scope>MUTAGENESIS OF HIS-2</scope>
</reference>
<reference key="9">
    <citation type="journal article" date="2013" name="Biochemistry">
        <title>Metal transfer within the Escherichia coli HypB-HypA complex of hydrogenase accessory proteins.</title>
        <authorList>
            <person name="Douglas C.D."/>
            <person name="Ngu T.T."/>
            <person name="Kaluarachchi H."/>
            <person name="Zamble D.B."/>
        </authorList>
    </citation>
    <scope>FUNCTION</scope>
    <scope>INTERACTION WITH HYPB</scope>
</reference>
<reference key="10">
    <citation type="journal article" date="2016" name="Biochemistry">
        <title>Mechanism of selective nickel transfer from HypB to HypA, Escherichia coli [NiFe]-hydrogenase accessory proteins.</title>
        <authorList>
            <person name="Lacasse M.J."/>
            <person name="Douglas C.D."/>
            <person name="Zamble D.B."/>
        </authorList>
    </citation>
    <scope>FUNCTION</scope>
    <scope>ACTIVITY REGULATION</scope>
    <scope>MUTAGENESIS OF HIS-2</scope>
</reference>
<name>HYPA_ECOLI</name>
<protein>
    <recommendedName>
        <fullName evidence="9">Hydrogenase maturation factor HypA</fullName>
    </recommendedName>
</protein>
<comment type="function">
    <text evidence="2 4 5 6 7">Involved in the maturation of [NiFe] hydrogenases. Required for nickel insertion into the metal center of the hydrogenase (PubMed:12081959, PubMed:15995183). Mediates transfer of nickel, but not zinc, from the low-affinity metal-binding site in the GTPase domain of HypB to HypA (PubMed:23899293, PubMed:27951644). HypA is involved in maturation of hydrogenase 3. It may partially substitute for the function of HybF and vice versa (PubMed:12081959). May act as a scaffold for assembly of the nickel insertion proteins with the hydrogenase precursor protein after delivery of the iron center (PubMed:22016389).</text>
</comment>
<comment type="activity regulation">
    <text evidence="7">GDP-loaded state of HypB enhances HypA-HypB complex formation and nickel transfer.</text>
</comment>
<comment type="subunit">
    <text evidence="4 5 6">Homodimer (PubMed:15995183). Forms complexes with HypB and SlyD, and interacts with HycE, the large subunit of hydrogenase 3 (PubMed:15995183, PubMed:22016389, PubMed:23899293).</text>
</comment>
<comment type="interaction">
    <interactant intactId="EBI-6290024">
        <id>P0A700</id>
    </interactant>
    <interactant intactId="EBI-552702">
        <id>P16431</id>
        <label>hycE</label>
    </interactant>
    <organismsDiffer>false</organismsDiffer>
    <experiments>14</experiments>
</comment>
<comment type="interaction">
    <interactant intactId="EBI-6290024">
        <id>P0A700</id>
    </interactant>
    <interactant intactId="EBI-6290024">
        <id>P0A700</id>
        <label>hypA</label>
    </interactant>
    <organismsDiffer>false</organismsDiffer>
    <experiments>4</experiments>
</comment>
<comment type="interaction">
    <interactant intactId="EBI-6290024">
        <id>P0A700</id>
    </interactant>
    <interactant intactId="EBI-558261">
        <id>P0AAN3</id>
        <label>hypB</label>
    </interactant>
    <organismsDiffer>false</organismsDiffer>
    <experiments>9</experiments>
</comment>
<comment type="subcellular location">
    <subcellularLocation>
        <location evidence="5">Cell inner membrane</location>
    </subcellularLocation>
</comment>
<comment type="disruption phenotype">
    <text evidence="2 3">Disruption of the gene prevents development of hydrogenase 3 activity, does not influence the level of hydrogenase 1 and leads to a considerable increase in hydrogenase 2 activity (PubMed:1482271). HypA-hybF double mutant is completely blocked in maturation of hydrogenases 1, 2 and 3. However, the inclusion of high nickel concentrations in the medium can restore limited activity of all three hydrogenases (PubMed:12081959).</text>
</comment>
<comment type="similarity">
    <text evidence="1 9">Belongs to the HypA/HybF family.</text>
</comment>